<organism>
    <name type="scientific">Rhizobium johnstonii (strain DSM 114642 / LMG 32736 / 3841)</name>
    <name type="common">Rhizobium leguminosarum bv. viciae</name>
    <dbReference type="NCBI Taxonomy" id="216596"/>
    <lineage>
        <taxon>Bacteria</taxon>
        <taxon>Pseudomonadati</taxon>
        <taxon>Pseudomonadota</taxon>
        <taxon>Alphaproteobacteria</taxon>
        <taxon>Hyphomicrobiales</taxon>
        <taxon>Rhizobiaceae</taxon>
        <taxon>Rhizobium/Agrobacterium group</taxon>
        <taxon>Rhizobium</taxon>
        <taxon>Rhizobium johnstonii</taxon>
    </lineage>
</organism>
<proteinExistence type="inferred from homology"/>
<sequence>MIQKNWQELIKPNKVEFSSSSRTRATLVAEPLERGFGLTLGNALRRVLLSSLRGAAVTAVQIDGVLHEFSSIPGVREDVTDIVLNIKEIAIKMDGDDAKRMVVRKQGPGVVTAGDIQTVGDIEILNPEHVICTLDEGAEIRMEFTVNNGKGYVPAERNRAEDAPIGLIPVDSLYSPVKKVSYKVENTREGQVLDYDKLNMTIETDGSITGEDAVAFAARILQDQLGVFVNFDEPQKETEEEAVTELAFNPALLKKVDELELSVRSANCLKNDNIVYIGDLIQKTEAEMLRTPNFGRKSLNEIKEVLASMGLHLGMEVPAWPPENIEDLAKRYEDQY</sequence>
<reference key="1">
    <citation type="journal article" date="2006" name="Genome Biol.">
        <title>The genome of Rhizobium leguminosarum has recognizable core and accessory components.</title>
        <authorList>
            <person name="Young J.P.W."/>
            <person name="Crossman L.C."/>
            <person name="Johnston A.W.B."/>
            <person name="Thomson N.R."/>
            <person name="Ghazoui Z.F."/>
            <person name="Hull K.H."/>
            <person name="Wexler M."/>
            <person name="Curson A.R.J."/>
            <person name="Todd J.D."/>
            <person name="Poole P.S."/>
            <person name="Mauchline T.H."/>
            <person name="East A.K."/>
            <person name="Quail M.A."/>
            <person name="Churcher C."/>
            <person name="Arrowsmith C."/>
            <person name="Cherevach I."/>
            <person name="Chillingworth T."/>
            <person name="Clarke K."/>
            <person name="Cronin A."/>
            <person name="Davis P."/>
            <person name="Fraser A."/>
            <person name="Hance Z."/>
            <person name="Hauser H."/>
            <person name="Jagels K."/>
            <person name="Moule S."/>
            <person name="Mungall K."/>
            <person name="Norbertczak H."/>
            <person name="Rabbinowitsch E."/>
            <person name="Sanders M."/>
            <person name="Simmonds M."/>
            <person name="Whitehead S."/>
            <person name="Parkhill J."/>
        </authorList>
    </citation>
    <scope>NUCLEOTIDE SEQUENCE [LARGE SCALE GENOMIC DNA]</scope>
    <source>
        <strain>DSM 114642 / LMG 32736 / 3841</strain>
    </source>
</reference>
<protein>
    <recommendedName>
        <fullName evidence="1">DNA-directed RNA polymerase subunit alpha</fullName>
        <shortName evidence="1">RNAP subunit alpha</shortName>
        <ecNumber evidence="1">2.7.7.6</ecNumber>
    </recommendedName>
    <alternativeName>
        <fullName evidence="1">RNA polymerase subunit alpha</fullName>
    </alternativeName>
    <alternativeName>
        <fullName evidence="1">Transcriptase subunit alpha</fullName>
    </alternativeName>
</protein>
<keyword id="KW-0240">DNA-directed RNA polymerase</keyword>
<keyword id="KW-0548">Nucleotidyltransferase</keyword>
<keyword id="KW-0804">Transcription</keyword>
<keyword id="KW-0808">Transferase</keyword>
<feature type="chain" id="PRO_0000264531" description="DNA-directed RNA polymerase subunit alpha">
    <location>
        <begin position="1"/>
        <end position="336"/>
    </location>
</feature>
<feature type="region of interest" description="Alpha N-terminal domain (alpha-NTD)" evidence="1">
    <location>
        <begin position="1"/>
        <end position="232"/>
    </location>
</feature>
<feature type="region of interest" description="Alpha C-terminal domain (alpha-CTD)" evidence="1">
    <location>
        <begin position="248"/>
        <end position="336"/>
    </location>
</feature>
<comment type="function">
    <text evidence="1">DNA-dependent RNA polymerase catalyzes the transcription of DNA into RNA using the four ribonucleoside triphosphates as substrates.</text>
</comment>
<comment type="catalytic activity">
    <reaction evidence="1">
        <text>RNA(n) + a ribonucleoside 5'-triphosphate = RNA(n+1) + diphosphate</text>
        <dbReference type="Rhea" id="RHEA:21248"/>
        <dbReference type="Rhea" id="RHEA-COMP:14527"/>
        <dbReference type="Rhea" id="RHEA-COMP:17342"/>
        <dbReference type="ChEBI" id="CHEBI:33019"/>
        <dbReference type="ChEBI" id="CHEBI:61557"/>
        <dbReference type="ChEBI" id="CHEBI:140395"/>
        <dbReference type="EC" id="2.7.7.6"/>
    </reaction>
</comment>
<comment type="subunit">
    <text evidence="1">Homodimer. The RNAP catalytic core consists of 2 alpha, 1 beta, 1 beta' and 1 omega subunit. When a sigma factor is associated with the core the holoenzyme is formed, which can initiate transcription.</text>
</comment>
<comment type="domain">
    <text evidence="1">The N-terminal domain is essential for RNAP assembly and basal transcription, whereas the C-terminal domain is involved in interaction with transcriptional regulators and with upstream promoter elements.</text>
</comment>
<comment type="similarity">
    <text evidence="1">Belongs to the RNA polymerase alpha chain family.</text>
</comment>
<gene>
    <name evidence="1" type="primary">rpoA</name>
    <name type="ordered locus">RL1798</name>
</gene>
<evidence type="ECO:0000255" key="1">
    <source>
        <dbReference type="HAMAP-Rule" id="MF_00059"/>
    </source>
</evidence>
<dbReference type="EC" id="2.7.7.6" evidence="1"/>
<dbReference type="EMBL" id="AM236080">
    <property type="protein sequence ID" value="CAK07293.1"/>
    <property type="molecule type" value="Genomic_DNA"/>
</dbReference>
<dbReference type="RefSeq" id="WP_003547579.1">
    <property type="nucleotide sequence ID" value="NC_008380.1"/>
</dbReference>
<dbReference type="SMR" id="Q1MIB7"/>
<dbReference type="EnsemblBacteria" id="CAK07293">
    <property type="protein sequence ID" value="CAK07293"/>
    <property type="gene ID" value="RL1798"/>
</dbReference>
<dbReference type="KEGG" id="rle:RL1798"/>
<dbReference type="eggNOG" id="COG0202">
    <property type="taxonomic scope" value="Bacteria"/>
</dbReference>
<dbReference type="HOGENOM" id="CLU_053084_0_0_5"/>
<dbReference type="Proteomes" id="UP000006575">
    <property type="component" value="Chromosome"/>
</dbReference>
<dbReference type="GO" id="GO:0005737">
    <property type="term" value="C:cytoplasm"/>
    <property type="evidence" value="ECO:0007669"/>
    <property type="project" value="UniProtKB-ARBA"/>
</dbReference>
<dbReference type="GO" id="GO:0000428">
    <property type="term" value="C:DNA-directed RNA polymerase complex"/>
    <property type="evidence" value="ECO:0007669"/>
    <property type="project" value="UniProtKB-KW"/>
</dbReference>
<dbReference type="GO" id="GO:0003677">
    <property type="term" value="F:DNA binding"/>
    <property type="evidence" value="ECO:0007669"/>
    <property type="project" value="UniProtKB-UniRule"/>
</dbReference>
<dbReference type="GO" id="GO:0003899">
    <property type="term" value="F:DNA-directed RNA polymerase activity"/>
    <property type="evidence" value="ECO:0007669"/>
    <property type="project" value="UniProtKB-UniRule"/>
</dbReference>
<dbReference type="GO" id="GO:0046983">
    <property type="term" value="F:protein dimerization activity"/>
    <property type="evidence" value="ECO:0007669"/>
    <property type="project" value="InterPro"/>
</dbReference>
<dbReference type="GO" id="GO:0006351">
    <property type="term" value="P:DNA-templated transcription"/>
    <property type="evidence" value="ECO:0007669"/>
    <property type="project" value="UniProtKB-UniRule"/>
</dbReference>
<dbReference type="CDD" id="cd06928">
    <property type="entry name" value="RNAP_alpha_NTD"/>
    <property type="match status" value="1"/>
</dbReference>
<dbReference type="FunFam" id="1.10.150.20:FF:000001">
    <property type="entry name" value="DNA-directed RNA polymerase subunit alpha"/>
    <property type="match status" value="1"/>
</dbReference>
<dbReference type="FunFam" id="2.170.120.12:FF:000001">
    <property type="entry name" value="DNA-directed RNA polymerase subunit alpha"/>
    <property type="match status" value="1"/>
</dbReference>
<dbReference type="Gene3D" id="1.10.150.20">
    <property type="entry name" value="5' to 3' exonuclease, C-terminal subdomain"/>
    <property type="match status" value="1"/>
</dbReference>
<dbReference type="Gene3D" id="2.170.120.12">
    <property type="entry name" value="DNA-directed RNA polymerase, insert domain"/>
    <property type="match status" value="1"/>
</dbReference>
<dbReference type="Gene3D" id="3.30.1360.10">
    <property type="entry name" value="RNA polymerase, RBP11-like subunit"/>
    <property type="match status" value="1"/>
</dbReference>
<dbReference type="HAMAP" id="MF_00059">
    <property type="entry name" value="RNApol_bact_RpoA"/>
    <property type="match status" value="1"/>
</dbReference>
<dbReference type="InterPro" id="IPR011262">
    <property type="entry name" value="DNA-dir_RNA_pol_insert"/>
</dbReference>
<dbReference type="InterPro" id="IPR011263">
    <property type="entry name" value="DNA-dir_RNA_pol_RpoA/D/Rpb3"/>
</dbReference>
<dbReference type="InterPro" id="IPR011773">
    <property type="entry name" value="DNA-dir_RpoA"/>
</dbReference>
<dbReference type="InterPro" id="IPR036603">
    <property type="entry name" value="RBP11-like"/>
</dbReference>
<dbReference type="InterPro" id="IPR011260">
    <property type="entry name" value="RNAP_asu_C"/>
</dbReference>
<dbReference type="InterPro" id="IPR036643">
    <property type="entry name" value="RNApol_insert_sf"/>
</dbReference>
<dbReference type="NCBIfam" id="NF003513">
    <property type="entry name" value="PRK05182.1-2"/>
    <property type="match status" value="1"/>
</dbReference>
<dbReference type="NCBIfam" id="NF003519">
    <property type="entry name" value="PRK05182.2-5"/>
    <property type="match status" value="1"/>
</dbReference>
<dbReference type="NCBIfam" id="TIGR02027">
    <property type="entry name" value="rpoA"/>
    <property type="match status" value="1"/>
</dbReference>
<dbReference type="Pfam" id="PF01000">
    <property type="entry name" value="RNA_pol_A_bac"/>
    <property type="match status" value="1"/>
</dbReference>
<dbReference type="Pfam" id="PF03118">
    <property type="entry name" value="RNA_pol_A_CTD"/>
    <property type="match status" value="1"/>
</dbReference>
<dbReference type="Pfam" id="PF01193">
    <property type="entry name" value="RNA_pol_L"/>
    <property type="match status" value="1"/>
</dbReference>
<dbReference type="SMART" id="SM00662">
    <property type="entry name" value="RPOLD"/>
    <property type="match status" value="1"/>
</dbReference>
<dbReference type="SUPFAM" id="SSF47789">
    <property type="entry name" value="C-terminal domain of RNA polymerase alpha subunit"/>
    <property type="match status" value="1"/>
</dbReference>
<dbReference type="SUPFAM" id="SSF56553">
    <property type="entry name" value="Insert subdomain of RNA polymerase alpha subunit"/>
    <property type="match status" value="1"/>
</dbReference>
<dbReference type="SUPFAM" id="SSF55257">
    <property type="entry name" value="RBP11-like subunits of RNA polymerase"/>
    <property type="match status" value="1"/>
</dbReference>
<name>RPOA_RHIJ3</name>
<accession>Q1MIB7</accession>